<name>NU2C2_WHEAT</name>
<reference key="1">
    <citation type="journal article" date="2000" name="Plant Mol. Biol. Rep.">
        <title>Chinese spring wheat (Triticum aestivum L.) chloroplast genome: complete sequence and contig clones.</title>
        <authorList>
            <person name="Ogihara Y."/>
            <person name="Isono K."/>
            <person name="Kojima T."/>
            <person name="Endo A."/>
            <person name="Hanaoka M."/>
            <person name="Shiina T."/>
            <person name="Terachi T."/>
            <person name="Utsugi S."/>
            <person name="Murata M."/>
            <person name="Mori N."/>
            <person name="Takumi S."/>
            <person name="Ikeo K."/>
            <person name="Gojobori T."/>
            <person name="Murai R."/>
            <person name="Murai K."/>
            <person name="Matsuoka Y."/>
            <person name="Ohnishi Y."/>
            <person name="Tajiri H."/>
            <person name="Tsunewaki K."/>
        </authorList>
    </citation>
    <scope>NUCLEOTIDE SEQUENCE [LARGE SCALE GENOMIC DNA]</scope>
    <source>
        <strain>cv. Chinese Spring</strain>
    </source>
</reference>
<proteinExistence type="inferred from homology"/>
<accession>P0CD55</accession>
<accession>P58282</accession>
<comment type="function">
    <text evidence="1">NDH shuttles electrons from NAD(P)H:plastoquinone, via FMN and iron-sulfur (Fe-S) centers, to quinones in the photosynthetic chain and possibly in a chloroplast respiratory chain. The immediate electron acceptor for the enzyme in this species is believed to be plastoquinone. Couples the redox reaction to proton translocation, and thus conserves the redox energy in a proton gradient.</text>
</comment>
<comment type="catalytic activity">
    <reaction evidence="1">
        <text>a plastoquinone + NADH + (n+1) H(+)(in) = a plastoquinol + NAD(+) + n H(+)(out)</text>
        <dbReference type="Rhea" id="RHEA:42608"/>
        <dbReference type="Rhea" id="RHEA-COMP:9561"/>
        <dbReference type="Rhea" id="RHEA-COMP:9562"/>
        <dbReference type="ChEBI" id="CHEBI:15378"/>
        <dbReference type="ChEBI" id="CHEBI:17757"/>
        <dbReference type="ChEBI" id="CHEBI:57540"/>
        <dbReference type="ChEBI" id="CHEBI:57945"/>
        <dbReference type="ChEBI" id="CHEBI:62192"/>
    </reaction>
</comment>
<comment type="catalytic activity">
    <reaction evidence="1">
        <text>a plastoquinone + NADPH + (n+1) H(+)(in) = a plastoquinol + NADP(+) + n H(+)(out)</text>
        <dbReference type="Rhea" id="RHEA:42612"/>
        <dbReference type="Rhea" id="RHEA-COMP:9561"/>
        <dbReference type="Rhea" id="RHEA-COMP:9562"/>
        <dbReference type="ChEBI" id="CHEBI:15378"/>
        <dbReference type="ChEBI" id="CHEBI:17757"/>
        <dbReference type="ChEBI" id="CHEBI:57783"/>
        <dbReference type="ChEBI" id="CHEBI:58349"/>
        <dbReference type="ChEBI" id="CHEBI:62192"/>
    </reaction>
</comment>
<comment type="subunit">
    <text evidence="1">NDH is composed of at least 16 different subunits, 5 of which are encoded in the nucleus.</text>
</comment>
<comment type="subcellular location">
    <subcellularLocation>
        <location evidence="1">Plastid</location>
        <location evidence="1">Chloroplast thylakoid membrane</location>
        <topology evidence="1">Multi-pass membrane protein</topology>
    </subcellularLocation>
</comment>
<comment type="similarity">
    <text evidence="1">Belongs to the complex I subunit 2 family.</text>
</comment>
<keyword id="KW-0150">Chloroplast</keyword>
<keyword id="KW-0472">Membrane</keyword>
<keyword id="KW-0520">NAD</keyword>
<keyword id="KW-0521">NADP</keyword>
<keyword id="KW-0934">Plastid</keyword>
<keyword id="KW-0618">Plastoquinone</keyword>
<keyword id="KW-0874">Quinone</keyword>
<keyword id="KW-1185">Reference proteome</keyword>
<keyword id="KW-0793">Thylakoid</keyword>
<keyword id="KW-1278">Translocase</keyword>
<keyword id="KW-0812">Transmembrane</keyword>
<keyword id="KW-1133">Transmembrane helix</keyword>
<keyword id="KW-0813">Transport</keyword>
<dbReference type="EC" id="7.1.1.-" evidence="1"/>
<dbReference type="EMBL" id="AB042240">
    <property type="protein sequence ID" value="BAB47094.1"/>
    <property type="molecule type" value="Genomic_DNA"/>
</dbReference>
<dbReference type="SMR" id="P0CD55"/>
<dbReference type="STRING" id="4565.P0CD55"/>
<dbReference type="KEGG" id="taes:803158"/>
<dbReference type="KEGG" id="taes:803213"/>
<dbReference type="Proteomes" id="UP000019116">
    <property type="component" value="Chloroplast"/>
</dbReference>
<dbReference type="GO" id="GO:0009535">
    <property type="term" value="C:chloroplast thylakoid membrane"/>
    <property type="evidence" value="ECO:0007669"/>
    <property type="project" value="UniProtKB-SubCell"/>
</dbReference>
<dbReference type="GO" id="GO:0008137">
    <property type="term" value="F:NADH dehydrogenase (ubiquinone) activity"/>
    <property type="evidence" value="ECO:0007669"/>
    <property type="project" value="InterPro"/>
</dbReference>
<dbReference type="GO" id="GO:0048038">
    <property type="term" value="F:quinone binding"/>
    <property type="evidence" value="ECO:0007669"/>
    <property type="project" value="UniProtKB-KW"/>
</dbReference>
<dbReference type="GO" id="GO:0042773">
    <property type="term" value="P:ATP synthesis coupled electron transport"/>
    <property type="evidence" value="ECO:0007669"/>
    <property type="project" value="InterPro"/>
</dbReference>
<dbReference type="GO" id="GO:0019684">
    <property type="term" value="P:photosynthesis, light reaction"/>
    <property type="evidence" value="ECO:0007669"/>
    <property type="project" value="UniProtKB-UniRule"/>
</dbReference>
<dbReference type="HAMAP" id="MF_00445">
    <property type="entry name" value="NDH1_NuoN_1"/>
    <property type="match status" value="1"/>
</dbReference>
<dbReference type="InterPro" id="IPR010096">
    <property type="entry name" value="NADH-Q_OxRdtase_suN/2"/>
</dbReference>
<dbReference type="InterPro" id="IPR001750">
    <property type="entry name" value="ND/Mrp_TM"/>
</dbReference>
<dbReference type="InterPro" id="IPR045693">
    <property type="entry name" value="Ndh2_N"/>
</dbReference>
<dbReference type="NCBIfam" id="TIGR01770">
    <property type="entry name" value="NDH_I_N"/>
    <property type="match status" value="1"/>
</dbReference>
<dbReference type="PANTHER" id="PTHR22773">
    <property type="entry name" value="NADH DEHYDROGENASE"/>
    <property type="match status" value="1"/>
</dbReference>
<dbReference type="Pfam" id="PF19530">
    <property type="entry name" value="Ndh2_N"/>
    <property type="match status" value="1"/>
</dbReference>
<dbReference type="Pfam" id="PF00361">
    <property type="entry name" value="Proton_antipo_M"/>
    <property type="match status" value="1"/>
</dbReference>
<dbReference type="PRINTS" id="PR01434">
    <property type="entry name" value="NADHDHGNASE5"/>
</dbReference>
<gene>
    <name evidence="1" type="primary">ndhB2</name>
</gene>
<evidence type="ECO:0000255" key="1">
    <source>
        <dbReference type="HAMAP-Rule" id="MF_00445"/>
    </source>
</evidence>
<organism>
    <name type="scientific">Triticum aestivum</name>
    <name type="common">Wheat</name>
    <dbReference type="NCBI Taxonomy" id="4565"/>
    <lineage>
        <taxon>Eukaryota</taxon>
        <taxon>Viridiplantae</taxon>
        <taxon>Streptophyta</taxon>
        <taxon>Embryophyta</taxon>
        <taxon>Tracheophyta</taxon>
        <taxon>Spermatophyta</taxon>
        <taxon>Magnoliopsida</taxon>
        <taxon>Liliopsida</taxon>
        <taxon>Poales</taxon>
        <taxon>Poaceae</taxon>
        <taxon>BOP clade</taxon>
        <taxon>Pooideae</taxon>
        <taxon>Triticodae</taxon>
        <taxon>Triticeae</taxon>
        <taxon>Triticinae</taxon>
        <taxon>Triticum</taxon>
    </lineage>
</organism>
<sequence>MIWHVQNENFILDSTSIFMKAFHLLLFNGSFIFPECILIFGLILLLMFDSTSVQKDRPWFYFISSTCLVISITALLFRWREEPIISFSGNFQTNNFNEIFQFLILLCSTLCIPLSVEYIECTEMAITEFLLFVLTATLGGMFLCGANDLITIFVAPECFSLCSYLLSGYTERDLRSNGASLQYLLMGGAGSSILVHGFSWLYGSSGGEIELQEIVNGLINTQMYNSPGISLALISITVGLGFKLSPAPFHQWTPDVYEGSLLHFVAFHSITSKVAASASATRILEFSLYFSSNEWHLLLEILAILSMILGNLLAITQTSMKRMLAYSSIGQIGYVIIGIIVGDSNDGYASMITYMLFYISMNLGTFACIVLFGLRTGTDNIRDYAGLYTKDPFLALSLALCLLSLGGLPPLAGFFGKLYLFWCGWQAGLYFLVSIGLLTSVLSIYYYLKIIKLLMTGRNQEITPYVRNYRRSPLRSNNSIELSMTVCVIASTIPGISMNPILAIAQDTLF</sequence>
<protein>
    <recommendedName>
        <fullName evidence="1">NAD(P)H-quinone oxidoreductase subunit 2 B, chloroplastic</fullName>
        <ecNumber evidence="1">7.1.1.-</ecNumber>
    </recommendedName>
    <alternativeName>
        <fullName evidence="1">NAD(P)H dehydrogenase, subunit 2 B</fullName>
    </alternativeName>
    <alternativeName>
        <fullName evidence="1">NADH-plastoquinone oxidoreductase subunit 2 B</fullName>
    </alternativeName>
</protein>
<geneLocation type="chloroplast"/>
<feature type="chain" id="PRO_0000391315" description="NAD(P)H-quinone oxidoreductase subunit 2 B, chloroplastic">
    <location>
        <begin position="1"/>
        <end position="510"/>
    </location>
</feature>
<feature type="transmembrane region" description="Helical" evidence="1">
    <location>
        <begin position="24"/>
        <end position="44"/>
    </location>
</feature>
<feature type="transmembrane region" description="Helical" evidence="1">
    <location>
        <begin position="59"/>
        <end position="79"/>
    </location>
</feature>
<feature type="transmembrane region" description="Helical" evidence="1">
    <location>
        <begin position="99"/>
        <end position="119"/>
    </location>
</feature>
<feature type="transmembrane region" description="Helical" evidence="1">
    <location>
        <begin position="124"/>
        <end position="144"/>
    </location>
</feature>
<feature type="transmembrane region" description="Helical" evidence="1">
    <location>
        <begin position="149"/>
        <end position="169"/>
    </location>
</feature>
<feature type="transmembrane region" description="Helical" evidence="1">
    <location>
        <begin position="183"/>
        <end position="203"/>
    </location>
</feature>
<feature type="transmembrane region" description="Helical" evidence="1">
    <location>
        <begin position="229"/>
        <end position="249"/>
    </location>
</feature>
<feature type="transmembrane region" description="Helical" evidence="1">
    <location>
        <begin position="295"/>
        <end position="315"/>
    </location>
</feature>
<feature type="transmembrane region" description="Helical" evidence="1">
    <location>
        <begin position="323"/>
        <end position="343"/>
    </location>
</feature>
<feature type="transmembrane region" description="Helical" evidence="1">
    <location>
        <begin position="354"/>
        <end position="374"/>
    </location>
</feature>
<feature type="transmembrane region" description="Helical" evidence="1">
    <location>
        <begin position="395"/>
        <end position="415"/>
    </location>
</feature>
<feature type="transmembrane region" description="Helical" evidence="1">
    <location>
        <begin position="418"/>
        <end position="438"/>
    </location>
</feature>